<accession>Q163I6</accession>
<keyword id="KW-0067">ATP-binding</keyword>
<keyword id="KW-0131">Cell cycle</keyword>
<keyword id="KW-0132">Cell division</keyword>
<keyword id="KW-0133">Cell shape</keyword>
<keyword id="KW-0961">Cell wall biogenesis/degradation</keyword>
<keyword id="KW-0963">Cytoplasm</keyword>
<keyword id="KW-0436">Ligase</keyword>
<keyword id="KW-0547">Nucleotide-binding</keyword>
<keyword id="KW-0573">Peptidoglycan synthesis</keyword>
<keyword id="KW-1185">Reference proteome</keyword>
<gene>
    <name evidence="1" type="primary">murD</name>
    <name type="ordered locus">RD1_3361</name>
</gene>
<comment type="function">
    <text evidence="1">Cell wall formation. Catalyzes the addition of glutamate to the nucleotide precursor UDP-N-acetylmuramoyl-L-alanine (UMA).</text>
</comment>
<comment type="catalytic activity">
    <reaction evidence="1">
        <text>UDP-N-acetyl-alpha-D-muramoyl-L-alanine + D-glutamate + ATP = UDP-N-acetyl-alpha-D-muramoyl-L-alanyl-D-glutamate + ADP + phosphate + H(+)</text>
        <dbReference type="Rhea" id="RHEA:16429"/>
        <dbReference type="ChEBI" id="CHEBI:15378"/>
        <dbReference type="ChEBI" id="CHEBI:29986"/>
        <dbReference type="ChEBI" id="CHEBI:30616"/>
        <dbReference type="ChEBI" id="CHEBI:43474"/>
        <dbReference type="ChEBI" id="CHEBI:83898"/>
        <dbReference type="ChEBI" id="CHEBI:83900"/>
        <dbReference type="ChEBI" id="CHEBI:456216"/>
        <dbReference type="EC" id="6.3.2.9"/>
    </reaction>
</comment>
<comment type="pathway">
    <text evidence="1">Cell wall biogenesis; peptidoglycan biosynthesis.</text>
</comment>
<comment type="subcellular location">
    <subcellularLocation>
        <location evidence="1">Cytoplasm</location>
    </subcellularLocation>
</comment>
<comment type="similarity">
    <text evidence="1">Belongs to the MurCDEF family.</text>
</comment>
<evidence type="ECO:0000255" key="1">
    <source>
        <dbReference type="HAMAP-Rule" id="MF_00639"/>
    </source>
</evidence>
<dbReference type="EC" id="6.3.2.9" evidence="1"/>
<dbReference type="EMBL" id="CP000362">
    <property type="protein sequence ID" value="ABG32857.1"/>
    <property type="molecule type" value="Genomic_DNA"/>
</dbReference>
<dbReference type="RefSeq" id="WP_011569473.1">
    <property type="nucleotide sequence ID" value="NC_008209.1"/>
</dbReference>
<dbReference type="SMR" id="Q163I6"/>
<dbReference type="STRING" id="375451.RD1_3361"/>
<dbReference type="KEGG" id="rde:RD1_3361"/>
<dbReference type="eggNOG" id="COG0771">
    <property type="taxonomic scope" value="Bacteria"/>
</dbReference>
<dbReference type="HOGENOM" id="CLU_032540_3_0_5"/>
<dbReference type="OrthoDB" id="9809796at2"/>
<dbReference type="UniPathway" id="UPA00219"/>
<dbReference type="Proteomes" id="UP000007029">
    <property type="component" value="Chromosome"/>
</dbReference>
<dbReference type="GO" id="GO:0005737">
    <property type="term" value="C:cytoplasm"/>
    <property type="evidence" value="ECO:0007669"/>
    <property type="project" value="UniProtKB-SubCell"/>
</dbReference>
<dbReference type="GO" id="GO:0005524">
    <property type="term" value="F:ATP binding"/>
    <property type="evidence" value="ECO:0007669"/>
    <property type="project" value="UniProtKB-UniRule"/>
</dbReference>
<dbReference type="GO" id="GO:0008764">
    <property type="term" value="F:UDP-N-acetylmuramoylalanine-D-glutamate ligase activity"/>
    <property type="evidence" value="ECO:0007669"/>
    <property type="project" value="UniProtKB-UniRule"/>
</dbReference>
<dbReference type="GO" id="GO:0051301">
    <property type="term" value="P:cell division"/>
    <property type="evidence" value="ECO:0007669"/>
    <property type="project" value="UniProtKB-KW"/>
</dbReference>
<dbReference type="GO" id="GO:0071555">
    <property type="term" value="P:cell wall organization"/>
    <property type="evidence" value="ECO:0007669"/>
    <property type="project" value="UniProtKB-KW"/>
</dbReference>
<dbReference type="GO" id="GO:0009252">
    <property type="term" value="P:peptidoglycan biosynthetic process"/>
    <property type="evidence" value="ECO:0007669"/>
    <property type="project" value="UniProtKB-UniRule"/>
</dbReference>
<dbReference type="GO" id="GO:0008360">
    <property type="term" value="P:regulation of cell shape"/>
    <property type="evidence" value="ECO:0007669"/>
    <property type="project" value="UniProtKB-KW"/>
</dbReference>
<dbReference type="Gene3D" id="3.90.190.20">
    <property type="entry name" value="Mur ligase, C-terminal domain"/>
    <property type="match status" value="1"/>
</dbReference>
<dbReference type="Gene3D" id="3.40.1190.10">
    <property type="entry name" value="Mur-like, catalytic domain"/>
    <property type="match status" value="1"/>
</dbReference>
<dbReference type="Gene3D" id="3.40.50.720">
    <property type="entry name" value="NAD(P)-binding Rossmann-like Domain"/>
    <property type="match status" value="1"/>
</dbReference>
<dbReference type="HAMAP" id="MF_00639">
    <property type="entry name" value="MurD"/>
    <property type="match status" value="1"/>
</dbReference>
<dbReference type="InterPro" id="IPR036565">
    <property type="entry name" value="Mur-like_cat_sf"/>
</dbReference>
<dbReference type="InterPro" id="IPR004101">
    <property type="entry name" value="Mur_ligase_C"/>
</dbReference>
<dbReference type="InterPro" id="IPR036615">
    <property type="entry name" value="Mur_ligase_C_dom_sf"/>
</dbReference>
<dbReference type="InterPro" id="IPR013221">
    <property type="entry name" value="Mur_ligase_cen"/>
</dbReference>
<dbReference type="InterPro" id="IPR005762">
    <property type="entry name" value="MurD"/>
</dbReference>
<dbReference type="NCBIfam" id="TIGR01087">
    <property type="entry name" value="murD"/>
    <property type="match status" value="1"/>
</dbReference>
<dbReference type="PANTHER" id="PTHR43692">
    <property type="entry name" value="UDP-N-ACETYLMURAMOYLALANINE--D-GLUTAMATE LIGASE"/>
    <property type="match status" value="1"/>
</dbReference>
<dbReference type="PANTHER" id="PTHR43692:SF1">
    <property type="entry name" value="UDP-N-ACETYLMURAMOYLALANINE--D-GLUTAMATE LIGASE"/>
    <property type="match status" value="1"/>
</dbReference>
<dbReference type="Pfam" id="PF02875">
    <property type="entry name" value="Mur_ligase_C"/>
    <property type="match status" value="1"/>
</dbReference>
<dbReference type="Pfam" id="PF08245">
    <property type="entry name" value="Mur_ligase_M"/>
    <property type="match status" value="1"/>
</dbReference>
<dbReference type="SUPFAM" id="SSF51984">
    <property type="entry name" value="MurCD N-terminal domain"/>
    <property type="match status" value="1"/>
</dbReference>
<dbReference type="SUPFAM" id="SSF53623">
    <property type="entry name" value="MurD-like peptide ligases, catalytic domain"/>
    <property type="match status" value="1"/>
</dbReference>
<dbReference type="SUPFAM" id="SSF53244">
    <property type="entry name" value="MurD-like peptide ligases, peptide-binding domain"/>
    <property type="match status" value="1"/>
</dbReference>
<proteinExistence type="inferred from homology"/>
<feature type="chain" id="PRO_0000257232" description="UDP-N-acetylmuramoylalanine--D-glutamate ligase">
    <location>
        <begin position="1"/>
        <end position="464"/>
    </location>
</feature>
<feature type="binding site" evidence="1">
    <location>
        <begin position="127"/>
        <end position="133"/>
    </location>
    <ligand>
        <name>ATP</name>
        <dbReference type="ChEBI" id="CHEBI:30616"/>
    </ligand>
</feature>
<protein>
    <recommendedName>
        <fullName evidence="1">UDP-N-acetylmuramoylalanine--D-glutamate ligase</fullName>
        <ecNumber evidence="1">6.3.2.9</ecNumber>
    </recommendedName>
    <alternativeName>
        <fullName evidence="1">D-glutamic acid-adding enzyme</fullName>
    </alternativeName>
    <alternativeName>
        <fullName evidence="1">UDP-N-acetylmuramoyl-L-alanyl-D-glutamate synthetase</fullName>
    </alternativeName>
</protein>
<reference key="1">
    <citation type="journal article" date="2007" name="J. Bacteriol.">
        <title>The complete genome sequence of Roseobacter denitrificans reveals a mixotrophic rather than photosynthetic metabolism.</title>
        <authorList>
            <person name="Swingley W.D."/>
            <person name="Sadekar S."/>
            <person name="Mastrian S.D."/>
            <person name="Matthies H.J."/>
            <person name="Hao J."/>
            <person name="Ramos H."/>
            <person name="Acharya C.R."/>
            <person name="Conrad A.L."/>
            <person name="Taylor H.L."/>
            <person name="Dejesa L.C."/>
            <person name="Shah M.K."/>
            <person name="O'Huallachain M.E."/>
            <person name="Lince M.T."/>
            <person name="Blankenship R.E."/>
            <person name="Beatty J.T."/>
            <person name="Touchman J.W."/>
        </authorList>
    </citation>
    <scope>NUCLEOTIDE SEQUENCE [LARGE SCALE GENOMIC DNA]</scope>
    <source>
        <strain>ATCC 33942 / OCh 114</strain>
    </source>
</reference>
<sequence length="464" mass="49248">MIPVQGLRGATVAVLGLGRTGMSAARALRAGGALPLCWDDNPDARARAQQEGFTCTQLSRVADFDDIACLIVSPGIPHLYPAPNPVVRLALQAGVPVDNDIGLFFRSFATNAWANFDTAPRVVAVTGSNGKSTTSALIHHILEHVGRPATLAGNIGRGVLDIDPPHDGEVVVLELSSYQTDLARSLTPDVAVFTNLSEDHLDRHGGMGGYFAAKRRLFAEGGPDRAIVGVDEDEGLFLAGQLAEGRADDRVIRISFAQKLTGPGWQVFARKGFLSEYRKGKQIASVDLRSVPGLPGVHNHQNACAAYAVCRSLGLAPKVIEAALHSFQGLPHRSQLVGQKDGVRFVNDSKATNADAAAKALAAFPSIRWICGGLEKDGGMDALRNASASVVKAYVIGREAAAFAMKLPVEAEICTTMAQAVEKAAREAEAGDVVLLAPAAASFDQYDNFEQRGDDFMQEVAKYL</sequence>
<organism>
    <name type="scientific">Roseobacter denitrificans (strain ATCC 33942 / OCh 114)</name>
    <name type="common">Erythrobacter sp. (strain OCh 114)</name>
    <name type="synonym">Roseobacter denitrificans</name>
    <dbReference type="NCBI Taxonomy" id="375451"/>
    <lineage>
        <taxon>Bacteria</taxon>
        <taxon>Pseudomonadati</taxon>
        <taxon>Pseudomonadota</taxon>
        <taxon>Alphaproteobacteria</taxon>
        <taxon>Rhodobacterales</taxon>
        <taxon>Roseobacteraceae</taxon>
        <taxon>Roseobacter</taxon>
    </lineage>
</organism>
<name>MURD_ROSDO</name>